<geneLocation type="chloroplast"/>
<dbReference type="EMBL" id="AJ506156">
    <property type="protein sequence ID" value="CAD45117.1"/>
    <property type="molecule type" value="Genomic_DNA"/>
</dbReference>
<dbReference type="RefSeq" id="NP_904109.1">
    <property type="nucleotide sequence ID" value="NC_005086.1"/>
</dbReference>
<dbReference type="SMR" id="Q70XZ3"/>
<dbReference type="STRING" id="13333.Q70XZ3"/>
<dbReference type="KEGG" id="atr:2597958"/>
<dbReference type="OrthoDB" id="970998at2759"/>
<dbReference type="Proteomes" id="UP000017836">
    <property type="component" value="Chloroplast"/>
</dbReference>
<dbReference type="GO" id="GO:0009535">
    <property type="term" value="C:chloroplast thylakoid membrane"/>
    <property type="evidence" value="ECO:0007669"/>
    <property type="project" value="UniProtKB-SubCell"/>
</dbReference>
<dbReference type="GO" id="GO:0009522">
    <property type="term" value="C:photosystem I"/>
    <property type="evidence" value="ECO:0007669"/>
    <property type="project" value="UniProtKB-KW"/>
</dbReference>
<dbReference type="GO" id="GO:0015979">
    <property type="term" value="P:photosynthesis"/>
    <property type="evidence" value="ECO:0007669"/>
    <property type="project" value="UniProtKB-UniRule"/>
</dbReference>
<dbReference type="HAMAP" id="MF_00431">
    <property type="entry name" value="PSI_PsaI"/>
    <property type="match status" value="1"/>
</dbReference>
<dbReference type="InterPro" id="IPR001302">
    <property type="entry name" value="PSI_PsaI"/>
</dbReference>
<dbReference type="InterPro" id="IPR036357">
    <property type="entry name" value="PSI_PsaI_sf"/>
</dbReference>
<dbReference type="NCBIfam" id="TIGR03052">
    <property type="entry name" value="PS_I_psaI"/>
    <property type="match status" value="1"/>
</dbReference>
<dbReference type="PANTHER" id="PTHR35775">
    <property type="match status" value="1"/>
</dbReference>
<dbReference type="PANTHER" id="PTHR35775:SF2">
    <property type="entry name" value="PHOTOSYSTEM I REACTION CENTER SUBUNIT VIII"/>
    <property type="match status" value="1"/>
</dbReference>
<dbReference type="Pfam" id="PF00796">
    <property type="entry name" value="PSI_8"/>
    <property type="match status" value="1"/>
</dbReference>
<dbReference type="SUPFAM" id="SSF81540">
    <property type="entry name" value="Subunit VIII of photosystem I reaction centre, PsaI"/>
    <property type="match status" value="1"/>
</dbReference>
<comment type="function">
    <text evidence="1">May help in the organization of the PsaL subunit.</text>
</comment>
<comment type="subcellular location">
    <subcellularLocation>
        <location evidence="1">Plastid</location>
        <location evidence="1">Chloroplast thylakoid membrane</location>
        <topology evidence="1">Single-pass membrane protein</topology>
    </subcellularLocation>
</comment>
<comment type="similarity">
    <text evidence="1">Belongs to the PsaI family.</text>
</comment>
<protein>
    <recommendedName>
        <fullName evidence="1">Photosystem I reaction center subunit VIII</fullName>
        <shortName evidence="1">PSI-I</shortName>
    </recommendedName>
</protein>
<accession>Q70XZ3</accession>
<proteinExistence type="inferred from homology"/>
<organism>
    <name type="scientific">Amborella trichopoda</name>
    <dbReference type="NCBI Taxonomy" id="13333"/>
    <lineage>
        <taxon>Eukaryota</taxon>
        <taxon>Viridiplantae</taxon>
        <taxon>Streptophyta</taxon>
        <taxon>Embryophyta</taxon>
        <taxon>Tracheophyta</taxon>
        <taxon>Spermatophyta</taxon>
        <taxon>Magnoliopsida</taxon>
        <taxon>Amborellales</taxon>
        <taxon>Amborellaceae</taxon>
        <taxon>Amborella</taxon>
    </lineage>
</organism>
<name>PSAI_AMBTC</name>
<gene>
    <name evidence="1" type="primary">psaI</name>
</gene>
<evidence type="ECO:0000255" key="1">
    <source>
        <dbReference type="HAMAP-Rule" id="MF_00431"/>
    </source>
</evidence>
<reference key="1">
    <citation type="journal article" date="2003" name="Mol. Biol. Evol.">
        <title>Analysis of the Amborella trichopoda chloroplast genome sequence suggests that Amborella is not a basal angiosperm.</title>
        <authorList>
            <person name="Goremykin V.V."/>
            <person name="Hirsch-Ernst K.I."/>
            <person name="Wolfl S."/>
            <person name="Hellwig F.H."/>
        </authorList>
    </citation>
    <scope>NUCLEOTIDE SEQUENCE [LARGE SCALE GENOMIC DNA]</scope>
</reference>
<feature type="chain" id="PRO_0000194640" description="Photosystem I reaction center subunit VIII">
    <location>
        <begin position="1"/>
        <end position="36"/>
    </location>
</feature>
<feature type="transmembrane region" description="Helical" evidence="1">
    <location>
        <begin position="6"/>
        <end position="28"/>
    </location>
</feature>
<sequence length="36" mass="4034">MTDFNLPSIFVPLIGLFFPAIAMASLFLHVQKNKIV</sequence>
<keyword id="KW-0150">Chloroplast</keyword>
<keyword id="KW-0472">Membrane</keyword>
<keyword id="KW-0602">Photosynthesis</keyword>
<keyword id="KW-0603">Photosystem I</keyword>
<keyword id="KW-0934">Plastid</keyword>
<keyword id="KW-1185">Reference proteome</keyword>
<keyword id="KW-0793">Thylakoid</keyword>
<keyword id="KW-0812">Transmembrane</keyword>
<keyword id="KW-1133">Transmembrane helix</keyword>